<sequence>MKIHEYQGKEILRKFGVAVPRGKPAFSVDEAVKVAQELGGPVWVVKAQIHAGGRGKGGGVKVAKSLEQVREYSNQILGMQLKTHQTGPEGQKVNRLLIEEGADIKKELYVGIVIDRVSQKVVVMASSEGGMDIEEVAEKTPEAIHKVAVEPSVGLQDAEADDLAKKIGVPDASIPQAREILKGLYKSFWETDASLAEINPLVLTGDGKVIALDAKFNFDSNALFRHPEIVAYRDLDEEDPAEIEASKFDLAYISLDGNIGCLVNGAGLAMATMDTIKLFGGEPANFLDVGGGATTEKVTEAFKLMLKNPGLKAILVNIFGGIMRCDVIAEGVIAGSKAVNLNVPLVVRMKGTNEDLGKKMLAESGLPIISADSMEEAAQKVVAAAAGK</sequence>
<reference key="1">
    <citation type="journal article" date="2004" name="Proc. Natl. Acad. Sci. U.S.A.">
        <title>Genomic plasticity of the causative agent of melioidosis, Burkholderia pseudomallei.</title>
        <authorList>
            <person name="Holden M.T.G."/>
            <person name="Titball R.W."/>
            <person name="Peacock S.J."/>
            <person name="Cerdeno-Tarraga A.-M."/>
            <person name="Atkins T."/>
            <person name="Crossman L.C."/>
            <person name="Pitt T."/>
            <person name="Churcher C."/>
            <person name="Mungall K.L."/>
            <person name="Bentley S.D."/>
            <person name="Sebaihia M."/>
            <person name="Thomson N.R."/>
            <person name="Bason N."/>
            <person name="Beacham I.R."/>
            <person name="Brooks K."/>
            <person name="Brown K.A."/>
            <person name="Brown N.F."/>
            <person name="Challis G.L."/>
            <person name="Cherevach I."/>
            <person name="Chillingworth T."/>
            <person name="Cronin A."/>
            <person name="Crossett B."/>
            <person name="Davis P."/>
            <person name="DeShazer D."/>
            <person name="Feltwell T."/>
            <person name="Fraser A."/>
            <person name="Hance Z."/>
            <person name="Hauser H."/>
            <person name="Holroyd S."/>
            <person name="Jagels K."/>
            <person name="Keith K.E."/>
            <person name="Maddison M."/>
            <person name="Moule S."/>
            <person name="Price C."/>
            <person name="Quail M.A."/>
            <person name="Rabbinowitsch E."/>
            <person name="Rutherford K."/>
            <person name="Sanders M."/>
            <person name="Simmonds M."/>
            <person name="Songsivilai S."/>
            <person name="Stevens K."/>
            <person name="Tumapa S."/>
            <person name="Vesaratchavest M."/>
            <person name="Whitehead S."/>
            <person name="Yeats C."/>
            <person name="Barrell B.G."/>
            <person name="Oyston P.C.F."/>
            <person name="Parkhill J."/>
        </authorList>
    </citation>
    <scope>NUCLEOTIDE SEQUENCE [LARGE SCALE GENOMIC DNA]</scope>
    <source>
        <strain>K96243</strain>
    </source>
</reference>
<evidence type="ECO:0000255" key="1">
    <source>
        <dbReference type="HAMAP-Rule" id="MF_00558"/>
    </source>
</evidence>
<feature type="chain" id="PRO_1000082045" description="Succinate--CoA ligase [ADP-forming] subunit beta">
    <location>
        <begin position="1"/>
        <end position="388"/>
    </location>
</feature>
<feature type="domain" description="ATP-grasp" evidence="1">
    <location>
        <begin position="9"/>
        <end position="244"/>
    </location>
</feature>
<feature type="binding site" evidence="1">
    <location>
        <position position="46"/>
    </location>
    <ligand>
        <name>ATP</name>
        <dbReference type="ChEBI" id="CHEBI:30616"/>
    </ligand>
</feature>
<feature type="binding site" evidence="1">
    <location>
        <begin position="53"/>
        <end position="55"/>
    </location>
    <ligand>
        <name>ATP</name>
        <dbReference type="ChEBI" id="CHEBI:30616"/>
    </ligand>
</feature>
<feature type="binding site" evidence="1">
    <location>
        <position position="99"/>
    </location>
    <ligand>
        <name>ATP</name>
        <dbReference type="ChEBI" id="CHEBI:30616"/>
    </ligand>
</feature>
<feature type="binding site" evidence="1">
    <location>
        <position position="102"/>
    </location>
    <ligand>
        <name>ATP</name>
        <dbReference type="ChEBI" id="CHEBI:30616"/>
    </ligand>
</feature>
<feature type="binding site" evidence="1">
    <location>
        <position position="107"/>
    </location>
    <ligand>
        <name>ATP</name>
        <dbReference type="ChEBI" id="CHEBI:30616"/>
    </ligand>
</feature>
<feature type="binding site" evidence="1">
    <location>
        <position position="199"/>
    </location>
    <ligand>
        <name>Mg(2+)</name>
        <dbReference type="ChEBI" id="CHEBI:18420"/>
    </ligand>
</feature>
<feature type="binding site" evidence="1">
    <location>
        <position position="213"/>
    </location>
    <ligand>
        <name>Mg(2+)</name>
        <dbReference type="ChEBI" id="CHEBI:18420"/>
    </ligand>
</feature>
<feature type="binding site" evidence="1">
    <location>
        <position position="264"/>
    </location>
    <ligand>
        <name>substrate</name>
        <note>ligand shared with subunit alpha</note>
    </ligand>
</feature>
<feature type="binding site" evidence="1">
    <location>
        <begin position="321"/>
        <end position="323"/>
    </location>
    <ligand>
        <name>substrate</name>
        <note>ligand shared with subunit alpha</note>
    </ligand>
</feature>
<gene>
    <name evidence="1" type="primary">sucC</name>
    <name type="ordered locus">BPSL0779</name>
</gene>
<name>SUCC_BURPS</name>
<proteinExistence type="inferred from homology"/>
<dbReference type="EC" id="6.2.1.5" evidence="1"/>
<dbReference type="EMBL" id="BX571965">
    <property type="protein sequence ID" value="CAH34771.1"/>
    <property type="molecule type" value="Genomic_DNA"/>
</dbReference>
<dbReference type="RefSeq" id="WP_004189251.1">
    <property type="nucleotide sequence ID" value="NZ_CP009538.1"/>
</dbReference>
<dbReference type="RefSeq" id="YP_107404.1">
    <property type="nucleotide sequence ID" value="NC_006350.1"/>
</dbReference>
<dbReference type="SMR" id="Q63WW2"/>
<dbReference type="STRING" id="272560.BPSL0779"/>
<dbReference type="GeneID" id="92978047"/>
<dbReference type="KEGG" id="bps:BPSL0779"/>
<dbReference type="PATRIC" id="fig|272560.51.peg.830"/>
<dbReference type="eggNOG" id="COG0045">
    <property type="taxonomic scope" value="Bacteria"/>
</dbReference>
<dbReference type="UniPathway" id="UPA00223">
    <property type="reaction ID" value="UER00999"/>
</dbReference>
<dbReference type="Proteomes" id="UP000000605">
    <property type="component" value="Chromosome 1"/>
</dbReference>
<dbReference type="GO" id="GO:0005829">
    <property type="term" value="C:cytosol"/>
    <property type="evidence" value="ECO:0007669"/>
    <property type="project" value="TreeGrafter"/>
</dbReference>
<dbReference type="GO" id="GO:0042709">
    <property type="term" value="C:succinate-CoA ligase complex"/>
    <property type="evidence" value="ECO:0007669"/>
    <property type="project" value="TreeGrafter"/>
</dbReference>
<dbReference type="GO" id="GO:0005524">
    <property type="term" value="F:ATP binding"/>
    <property type="evidence" value="ECO:0007669"/>
    <property type="project" value="UniProtKB-UniRule"/>
</dbReference>
<dbReference type="GO" id="GO:0000287">
    <property type="term" value="F:magnesium ion binding"/>
    <property type="evidence" value="ECO:0007669"/>
    <property type="project" value="UniProtKB-UniRule"/>
</dbReference>
<dbReference type="GO" id="GO:0004775">
    <property type="term" value="F:succinate-CoA ligase (ADP-forming) activity"/>
    <property type="evidence" value="ECO:0007669"/>
    <property type="project" value="UniProtKB-UniRule"/>
</dbReference>
<dbReference type="GO" id="GO:0004776">
    <property type="term" value="F:succinate-CoA ligase (GDP-forming) activity"/>
    <property type="evidence" value="ECO:0007669"/>
    <property type="project" value="RHEA"/>
</dbReference>
<dbReference type="GO" id="GO:0006104">
    <property type="term" value="P:succinyl-CoA metabolic process"/>
    <property type="evidence" value="ECO:0007669"/>
    <property type="project" value="TreeGrafter"/>
</dbReference>
<dbReference type="GO" id="GO:0006099">
    <property type="term" value="P:tricarboxylic acid cycle"/>
    <property type="evidence" value="ECO:0007669"/>
    <property type="project" value="UniProtKB-UniRule"/>
</dbReference>
<dbReference type="FunFam" id="3.30.1490.20:FF:000002">
    <property type="entry name" value="Succinate--CoA ligase [ADP-forming] subunit beta"/>
    <property type="match status" value="1"/>
</dbReference>
<dbReference type="FunFam" id="3.30.470.20:FF:000002">
    <property type="entry name" value="Succinate--CoA ligase [ADP-forming] subunit beta"/>
    <property type="match status" value="1"/>
</dbReference>
<dbReference type="FunFam" id="3.40.50.261:FF:000001">
    <property type="entry name" value="Succinate--CoA ligase [ADP-forming] subunit beta"/>
    <property type="match status" value="1"/>
</dbReference>
<dbReference type="Gene3D" id="3.30.1490.20">
    <property type="entry name" value="ATP-grasp fold, A domain"/>
    <property type="match status" value="1"/>
</dbReference>
<dbReference type="Gene3D" id="3.30.470.20">
    <property type="entry name" value="ATP-grasp fold, B domain"/>
    <property type="match status" value="1"/>
</dbReference>
<dbReference type="Gene3D" id="3.40.50.261">
    <property type="entry name" value="Succinyl-CoA synthetase domains"/>
    <property type="match status" value="1"/>
</dbReference>
<dbReference type="HAMAP" id="MF_00558">
    <property type="entry name" value="Succ_CoA_beta"/>
    <property type="match status" value="1"/>
</dbReference>
<dbReference type="InterPro" id="IPR011761">
    <property type="entry name" value="ATP-grasp"/>
</dbReference>
<dbReference type="InterPro" id="IPR013650">
    <property type="entry name" value="ATP-grasp_succ-CoA_synth-type"/>
</dbReference>
<dbReference type="InterPro" id="IPR013815">
    <property type="entry name" value="ATP_grasp_subdomain_1"/>
</dbReference>
<dbReference type="InterPro" id="IPR017866">
    <property type="entry name" value="Succ-CoA_synthase_bsu_CS"/>
</dbReference>
<dbReference type="InterPro" id="IPR005811">
    <property type="entry name" value="SUCC_ACL_C"/>
</dbReference>
<dbReference type="InterPro" id="IPR005809">
    <property type="entry name" value="Succ_CoA_ligase-like_bsu"/>
</dbReference>
<dbReference type="InterPro" id="IPR016102">
    <property type="entry name" value="Succinyl-CoA_synth-like"/>
</dbReference>
<dbReference type="NCBIfam" id="NF001913">
    <property type="entry name" value="PRK00696.1"/>
    <property type="match status" value="1"/>
</dbReference>
<dbReference type="NCBIfam" id="TIGR01016">
    <property type="entry name" value="sucCoAbeta"/>
    <property type="match status" value="1"/>
</dbReference>
<dbReference type="PANTHER" id="PTHR11815:SF10">
    <property type="entry name" value="SUCCINATE--COA LIGASE [GDP-FORMING] SUBUNIT BETA, MITOCHONDRIAL"/>
    <property type="match status" value="1"/>
</dbReference>
<dbReference type="PANTHER" id="PTHR11815">
    <property type="entry name" value="SUCCINYL-COA SYNTHETASE BETA CHAIN"/>
    <property type="match status" value="1"/>
</dbReference>
<dbReference type="Pfam" id="PF08442">
    <property type="entry name" value="ATP-grasp_2"/>
    <property type="match status" value="1"/>
</dbReference>
<dbReference type="Pfam" id="PF00549">
    <property type="entry name" value="Ligase_CoA"/>
    <property type="match status" value="1"/>
</dbReference>
<dbReference type="PIRSF" id="PIRSF001554">
    <property type="entry name" value="SucCS_beta"/>
    <property type="match status" value="1"/>
</dbReference>
<dbReference type="SUPFAM" id="SSF56059">
    <property type="entry name" value="Glutathione synthetase ATP-binding domain-like"/>
    <property type="match status" value="1"/>
</dbReference>
<dbReference type="SUPFAM" id="SSF52210">
    <property type="entry name" value="Succinyl-CoA synthetase domains"/>
    <property type="match status" value="1"/>
</dbReference>
<dbReference type="PROSITE" id="PS50975">
    <property type="entry name" value="ATP_GRASP"/>
    <property type="match status" value="1"/>
</dbReference>
<dbReference type="PROSITE" id="PS01217">
    <property type="entry name" value="SUCCINYL_COA_LIG_3"/>
    <property type="match status" value="1"/>
</dbReference>
<keyword id="KW-0067">ATP-binding</keyword>
<keyword id="KW-0436">Ligase</keyword>
<keyword id="KW-0460">Magnesium</keyword>
<keyword id="KW-0479">Metal-binding</keyword>
<keyword id="KW-0547">Nucleotide-binding</keyword>
<keyword id="KW-1185">Reference proteome</keyword>
<keyword id="KW-0816">Tricarboxylic acid cycle</keyword>
<comment type="function">
    <text evidence="1">Succinyl-CoA synthetase functions in the citric acid cycle (TCA), coupling the hydrolysis of succinyl-CoA to the synthesis of either ATP or GTP and thus represents the only step of substrate-level phosphorylation in the TCA. The beta subunit provides nucleotide specificity of the enzyme and binds the substrate succinate, while the binding sites for coenzyme A and phosphate are found in the alpha subunit.</text>
</comment>
<comment type="catalytic activity">
    <reaction evidence="1">
        <text>succinate + ATP + CoA = succinyl-CoA + ADP + phosphate</text>
        <dbReference type="Rhea" id="RHEA:17661"/>
        <dbReference type="ChEBI" id="CHEBI:30031"/>
        <dbReference type="ChEBI" id="CHEBI:30616"/>
        <dbReference type="ChEBI" id="CHEBI:43474"/>
        <dbReference type="ChEBI" id="CHEBI:57287"/>
        <dbReference type="ChEBI" id="CHEBI:57292"/>
        <dbReference type="ChEBI" id="CHEBI:456216"/>
        <dbReference type="EC" id="6.2.1.5"/>
    </reaction>
    <physiologicalReaction direction="right-to-left" evidence="1">
        <dbReference type="Rhea" id="RHEA:17663"/>
    </physiologicalReaction>
</comment>
<comment type="catalytic activity">
    <reaction evidence="1">
        <text>GTP + succinate + CoA = succinyl-CoA + GDP + phosphate</text>
        <dbReference type="Rhea" id="RHEA:22120"/>
        <dbReference type="ChEBI" id="CHEBI:30031"/>
        <dbReference type="ChEBI" id="CHEBI:37565"/>
        <dbReference type="ChEBI" id="CHEBI:43474"/>
        <dbReference type="ChEBI" id="CHEBI:57287"/>
        <dbReference type="ChEBI" id="CHEBI:57292"/>
        <dbReference type="ChEBI" id="CHEBI:58189"/>
    </reaction>
    <physiologicalReaction direction="right-to-left" evidence="1">
        <dbReference type="Rhea" id="RHEA:22122"/>
    </physiologicalReaction>
</comment>
<comment type="cofactor">
    <cofactor evidence="1">
        <name>Mg(2+)</name>
        <dbReference type="ChEBI" id="CHEBI:18420"/>
    </cofactor>
    <text evidence="1">Binds 1 Mg(2+) ion per subunit.</text>
</comment>
<comment type="pathway">
    <text evidence="1">Carbohydrate metabolism; tricarboxylic acid cycle; succinate from succinyl-CoA (ligase route): step 1/1.</text>
</comment>
<comment type="subunit">
    <text evidence="1">Heterotetramer of two alpha and two beta subunits.</text>
</comment>
<comment type="similarity">
    <text evidence="1">Belongs to the succinate/malate CoA ligase beta subunit family.</text>
</comment>
<organism>
    <name type="scientific">Burkholderia pseudomallei (strain K96243)</name>
    <dbReference type="NCBI Taxonomy" id="272560"/>
    <lineage>
        <taxon>Bacteria</taxon>
        <taxon>Pseudomonadati</taxon>
        <taxon>Pseudomonadota</taxon>
        <taxon>Betaproteobacteria</taxon>
        <taxon>Burkholderiales</taxon>
        <taxon>Burkholderiaceae</taxon>
        <taxon>Burkholderia</taxon>
        <taxon>pseudomallei group</taxon>
    </lineage>
</organism>
<protein>
    <recommendedName>
        <fullName evidence="1">Succinate--CoA ligase [ADP-forming] subunit beta</fullName>
        <ecNumber evidence="1">6.2.1.5</ecNumber>
    </recommendedName>
    <alternativeName>
        <fullName evidence="1">Succinyl-CoA synthetase subunit beta</fullName>
        <shortName evidence="1">SCS-beta</shortName>
    </alternativeName>
</protein>
<accession>Q63WW2</accession>